<sequence>MNKNCLICHRKAAGQHYGVLSCFACKMFFHRMVVENLHYCCQKFNKCYEKFIILPKCKACRYQKCLEMGMQAFPRRVKSFEESMDLKIQRMLMNLSEMDEQRHWRMLNSYSIEDPSLGDVLVDSNVMKIMRKPSNQKVTAHEWAFLDVYSRISHFSNFEFMNNISFADRKLIFSFNCLRTGVFHGSMRTLREQRDCLLTPSGEDVYPDAVHNLFKDSPGLLNRTCCLLVSKLIELKVTNEEYQLLSLIFFCNPTISHNLSDFARNTLASHQIKYSSALFRHLQITNPGTAPVRFQELISLVHVINRVTNDMQHVSMMFQCMIPSFKFKQLVTDTFVDCGVVQKKSNVKILNEKPCADSSQDFIFHKNKFIH</sequence>
<dbReference type="EMBL" id="Z83233">
    <property type="protein sequence ID" value="CAB05760.3"/>
    <property type="molecule type" value="Genomic_DNA"/>
</dbReference>
<dbReference type="PIR" id="T23364">
    <property type="entry name" value="T23364"/>
</dbReference>
<dbReference type="RefSeq" id="NP_506898.2">
    <property type="nucleotide sequence ID" value="NM_074497.5"/>
</dbReference>
<dbReference type="SMR" id="O17927"/>
<dbReference type="BioGRID" id="45045">
    <property type="interactions" value="2"/>
</dbReference>
<dbReference type="DIP" id="DIP-25072N"/>
<dbReference type="FunCoup" id="O17927">
    <property type="interactions" value="10"/>
</dbReference>
<dbReference type="IntAct" id="O17927">
    <property type="interactions" value="2"/>
</dbReference>
<dbReference type="STRING" id="6239.K06B4.1.1"/>
<dbReference type="PaxDb" id="6239-K06B4.1"/>
<dbReference type="EnsemblMetazoa" id="K06B4.1.1">
    <property type="protein sequence ID" value="K06B4.1.1"/>
    <property type="gene ID" value="WBGene00003641"/>
</dbReference>
<dbReference type="GeneID" id="180052"/>
<dbReference type="KEGG" id="cel:CELE_K06B4.1"/>
<dbReference type="UCSC" id="K06B4.1">
    <property type="organism name" value="c. elegans"/>
</dbReference>
<dbReference type="AGR" id="WB:WBGene00003641"/>
<dbReference type="CTD" id="180052"/>
<dbReference type="WormBase" id="K06B4.1">
    <property type="protein sequence ID" value="CE35582"/>
    <property type="gene ID" value="WBGene00003641"/>
    <property type="gene designation" value="nhr-51"/>
</dbReference>
<dbReference type="eggNOG" id="KOG3575">
    <property type="taxonomic scope" value="Eukaryota"/>
</dbReference>
<dbReference type="GeneTree" id="ENSGT00970000195839"/>
<dbReference type="HOGENOM" id="CLU_007368_3_0_1"/>
<dbReference type="InParanoid" id="O17927"/>
<dbReference type="OMA" id="AHEWAFL"/>
<dbReference type="OrthoDB" id="5786884at2759"/>
<dbReference type="PhylomeDB" id="O17927"/>
<dbReference type="PRO" id="PR:O17927"/>
<dbReference type="Proteomes" id="UP000001940">
    <property type="component" value="Chromosome V"/>
</dbReference>
<dbReference type="Bgee" id="WBGene00003641">
    <property type="expression patterns" value="Expressed in larva"/>
</dbReference>
<dbReference type="GO" id="GO:0005634">
    <property type="term" value="C:nucleus"/>
    <property type="evidence" value="ECO:0007669"/>
    <property type="project" value="UniProtKB-SubCell"/>
</dbReference>
<dbReference type="GO" id="GO:0003700">
    <property type="term" value="F:DNA-binding transcription factor activity"/>
    <property type="evidence" value="ECO:0007669"/>
    <property type="project" value="InterPro"/>
</dbReference>
<dbReference type="GO" id="GO:0000978">
    <property type="term" value="F:RNA polymerase II cis-regulatory region sequence-specific DNA binding"/>
    <property type="evidence" value="ECO:0007669"/>
    <property type="project" value="InterPro"/>
</dbReference>
<dbReference type="GO" id="GO:0008270">
    <property type="term" value="F:zinc ion binding"/>
    <property type="evidence" value="ECO:0007669"/>
    <property type="project" value="UniProtKB-KW"/>
</dbReference>
<dbReference type="CDD" id="cd06960">
    <property type="entry name" value="NR_DBD_HNF4A"/>
    <property type="match status" value="1"/>
</dbReference>
<dbReference type="Gene3D" id="3.30.50.10">
    <property type="entry name" value="Erythroid Transcription Factor GATA-1, subunit A"/>
    <property type="match status" value="1"/>
</dbReference>
<dbReference type="Gene3D" id="1.10.565.10">
    <property type="entry name" value="Retinoid X Receptor"/>
    <property type="match status" value="1"/>
</dbReference>
<dbReference type="InterPro" id="IPR049636">
    <property type="entry name" value="HNF4-like_DBD"/>
</dbReference>
<dbReference type="InterPro" id="IPR035500">
    <property type="entry name" value="NHR-like_dom_sf"/>
</dbReference>
<dbReference type="InterPro" id="IPR000536">
    <property type="entry name" value="Nucl_hrmn_rcpt_lig-bd"/>
</dbReference>
<dbReference type="InterPro" id="IPR001628">
    <property type="entry name" value="Znf_hrmn_rcpt"/>
</dbReference>
<dbReference type="InterPro" id="IPR013088">
    <property type="entry name" value="Znf_NHR/GATA"/>
</dbReference>
<dbReference type="PANTHER" id="PTHR45886:SF2">
    <property type="entry name" value="NUCLEAR HORMONE RECEPTOR FAMILY-RELATED"/>
    <property type="match status" value="1"/>
</dbReference>
<dbReference type="PANTHER" id="PTHR45886">
    <property type="entry name" value="NUCLEAR HORMONE RECEPTOR FAMILY-RELATED-RELATED"/>
    <property type="match status" value="1"/>
</dbReference>
<dbReference type="Pfam" id="PF00104">
    <property type="entry name" value="Hormone_recep"/>
    <property type="match status" value="1"/>
</dbReference>
<dbReference type="Pfam" id="PF00105">
    <property type="entry name" value="zf-C4"/>
    <property type="match status" value="1"/>
</dbReference>
<dbReference type="PRINTS" id="PR00047">
    <property type="entry name" value="STROIDFINGER"/>
</dbReference>
<dbReference type="SMART" id="SM00430">
    <property type="entry name" value="HOLI"/>
    <property type="match status" value="1"/>
</dbReference>
<dbReference type="SMART" id="SM00399">
    <property type="entry name" value="ZnF_C4"/>
    <property type="match status" value="1"/>
</dbReference>
<dbReference type="SUPFAM" id="SSF57716">
    <property type="entry name" value="Glucocorticoid receptor-like (DNA-binding domain)"/>
    <property type="match status" value="1"/>
</dbReference>
<dbReference type="SUPFAM" id="SSF48508">
    <property type="entry name" value="Nuclear receptor ligand-binding domain"/>
    <property type="match status" value="1"/>
</dbReference>
<dbReference type="PROSITE" id="PS51843">
    <property type="entry name" value="NR_LBD"/>
    <property type="match status" value="1"/>
</dbReference>
<dbReference type="PROSITE" id="PS51030">
    <property type="entry name" value="NUCLEAR_REC_DBD_2"/>
    <property type="match status" value="1"/>
</dbReference>
<gene>
    <name type="primary">nhr-51</name>
    <name type="ORF">K06B4.1</name>
</gene>
<feature type="chain" id="PRO_0000223577" description="Nuclear hormone receptor family member nhr-51">
    <location>
        <begin position="1"/>
        <end position="371"/>
    </location>
</feature>
<feature type="domain" description="NR LBD" evidence="2">
    <location>
        <begin position="98"/>
        <end position="337"/>
    </location>
</feature>
<feature type="DNA-binding region" description="Nuclear receptor" evidence="1">
    <location>
        <begin position="2"/>
        <end position="77"/>
    </location>
</feature>
<feature type="zinc finger region" description="NR C4-type" evidence="1">
    <location>
        <begin position="5"/>
        <end position="25"/>
    </location>
</feature>
<feature type="zinc finger region" description="NR C4-type" evidence="1">
    <location>
        <begin position="41"/>
        <end position="60"/>
    </location>
</feature>
<comment type="function">
    <text>Orphan nuclear receptor.</text>
</comment>
<comment type="subcellular location">
    <subcellularLocation>
        <location evidence="1">Nucleus</location>
    </subcellularLocation>
</comment>
<comment type="similarity">
    <text evidence="3">Belongs to the nuclear hormone receptor family.</text>
</comment>
<reference key="1">
    <citation type="journal article" date="1998" name="Science">
        <title>Genome sequence of the nematode C. elegans: a platform for investigating biology.</title>
        <authorList>
            <consortium name="The C. elegans sequencing consortium"/>
        </authorList>
    </citation>
    <scope>NUCLEOTIDE SEQUENCE [LARGE SCALE GENOMIC DNA]</scope>
    <source>
        <strain>Bristol N2</strain>
    </source>
</reference>
<accession>O17927</accession>
<proteinExistence type="inferred from homology"/>
<protein>
    <recommendedName>
        <fullName>Nuclear hormone receptor family member nhr-51</fullName>
    </recommendedName>
</protein>
<evidence type="ECO:0000255" key="1">
    <source>
        <dbReference type="PROSITE-ProRule" id="PRU00407"/>
    </source>
</evidence>
<evidence type="ECO:0000255" key="2">
    <source>
        <dbReference type="PROSITE-ProRule" id="PRU01189"/>
    </source>
</evidence>
<evidence type="ECO:0000305" key="3"/>
<organism>
    <name type="scientific">Caenorhabditis elegans</name>
    <dbReference type="NCBI Taxonomy" id="6239"/>
    <lineage>
        <taxon>Eukaryota</taxon>
        <taxon>Metazoa</taxon>
        <taxon>Ecdysozoa</taxon>
        <taxon>Nematoda</taxon>
        <taxon>Chromadorea</taxon>
        <taxon>Rhabditida</taxon>
        <taxon>Rhabditina</taxon>
        <taxon>Rhabditomorpha</taxon>
        <taxon>Rhabditoidea</taxon>
        <taxon>Rhabditidae</taxon>
        <taxon>Peloderinae</taxon>
        <taxon>Caenorhabditis</taxon>
    </lineage>
</organism>
<keyword id="KW-0238">DNA-binding</keyword>
<keyword id="KW-0479">Metal-binding</keyword>
<keyword id="KW-0539">Nucleus</keyword>
<keyword id="KW-0675">Receptor</keyword>
<keyword id="KW-1185">Reference proteome</keyword>
<keyword id="KW-0804">Transcription</keyword>
<keyword id="KW-0805">Transcription regulation</keyword>
<keyword id="KW-0862">Zinc</keyword>
<keyword id="KW-0863">Zinc-finger</keyword>
<name>NHR51_CAEEL</name>